<comment type="function">
    <text evidence="1">Cell wall formation. Adds enolpyruvyl to UDP-N-acetylglucosamine.</text>
</comment>
<comment type="catalytic activity">
    <reaction evidence="1">
        <text>phosphoenolpyruvate + UDP-N-acetyl-alpha-D-glucosamine = UDP-N-acetyl-3-O-(1-carboxyvinyl)-alpha-D-glucosamine + phosphate</text>
        <dbReference type="Rhea" id="RHEA:18681"/>
        <dbReference type="ChEBI" id="CHEBI:43474"/>
        <dbReference type="ChEBI" id="CHEBI:57705"/>
        <dbReference type="ChEBI" id="CHEBI:58702"/>
        <dbReference type="ChEBI" id="CHEBI:68483"/>
        <dbReference type="EC" id="2.5.1.7"/>
    </reaction>
</comment>
<comment type="pathway">
    <text evidence="1">Cell wall biogenesis; peptidoglycan biosynthesis.</text>
</comment>
<comment type="subcellular location">
    <subcellularLocation>
        <location evidence="1">Cytoplasm</location>
    </subcellularLocation>
</comment>
<comment type="similarity">
    <text evidence="1">Belongs to the EPSP synthase family. MurA subfamily.</text>
</comment>
<reference key="1">
    <citation type="journal article" date="2010" name="Appl. Environ. Microbiol.">
        <title>Conserved symbiotic plasmid DNA sequences in the multireplicon pangenomic structure of Rhizobium etli.</title>
        <authorList>
            <person name="Gonzalez V."/>
            <person name="Acosta J.L."/>
            <person name="Santamaria R.I."/>
            <person name="Bustos P."/>
            <person name="Fernandez J.L."/>
            <person name="Hernandez Gonzalez I.L."/>
            <person name="Diaz R."/>
            <person name="Flores M."/>
            <person name="Palacios R."/>
            <person name="Mora J."/>
            <person name="Davila G."/>
        </authorList>
    </citation>
    <scope>NUCLEOTIDE SEQUENCE [LARGE SCALE GENOMIC DNA]</scope>
    <source>
        <strain>CIAT 652</strain>
    </source>
</reference>
<accession>B3PNT1</accession>
<dbReference type="EC" id="2.5.1.7" evidence="1"/>
<dbReference type="EMBL" id="CP001074">
    <property type="protein sequence ID" value="ACE89644.1"/>
    <property type="molecule type" value="Genomic_DNA"/>
</dbReference>
<dbReference type="SMR" id="B3PNT1"/>
<dbReference type="KEGG" id="rec:RHECIAT_CH0000654"/>
<dbReference type="eggNOG" id="COG0766">
    <property type="taxonomic scope" value="Bacteria"/>
</dbReference>
<dbReference type="HOGENOM" id="CLU_027387_0_0_5"/>
<dbReference type="UniPathway" id="UPA00219"/>
<dbReference type="Proteomes" id="UP000008817">
    <property type="component" value="Chromosome"/>
</dbReference>
<dbReference type="GO" id="GO:0005737">
    <property type="term" value="C:cytoplasm"/>
    <property type="evidence" value="ECO:0007669"/>
    <property type="project" value="UniProtKB-SubCell"/>
</dbReference>
<dbReference type="GO" id="GO:0008760">
    <property type="term" value="F:UDP-N-acetylglucosamine 1-carboxyvinyltransferase activity"/>
    <property type="evidence" value="ECO:0007669"/>
    <property type="project" value="UniProtKB-UniRule"/>
</dbReference>
<dbReference type="GO" id="GO:0051301">
    <property type="term" value="P:cell division"/>
    <property type="evidence" value="ECO:0007669"/>
    <property type="project" value="UniProtKB-KW"/>
</dbReference>
<dbReference type="GO" id="GO:0071555">
    <property type="term" value="P:cell wall organization"/>
    <property type="evidence" value="ECO:0007669"/>
    <property type="project" value="UniProtKB-KW"/>
</dbReference>
<dbReference type="GO" id="GO:0009252">
    <property type="term" value="P:peptidoglycan biosynthetic process"/>
    <property type="evidence" value="ECO:0007669"/>
    <property type="project" value="UniProtKB-UniRule"/>
</dbReference>
<dbReference type="GO" id="GO:0008360">
    <property type="term" value="P:regulation of cell shape"/>
    <property type="evidence" value="ECO:0007669"/>
    <property type="project" value="UniProtKB-KW"/>
</dbReference>
<dbReference type="GO" id="GO:0019277">
    <property type="term" value="P:UDP-N-acetylgalactosamine biosynthetic process"/>
    <property type="evidence" value="ECO:0007669"/>
    <property type="project" value="InterPro"/>
</dbReference>
<dbReference type="CDD" id="cd01555">
    <property type="entry name" value="UdpNAET"/>
    <property type="match status" value="1"/>
</dbReference>
<dbReference type="FunFam" id="3.65.10.10:FF:000001">
    <property type="entry name" value="UDP-N-acetylglucosamine 1-carboxyvinyltransferase"/>
    <property type="match status" value="1"/>
</dbReference>
<dbReference type="Gene3D" id="3.65.10.10">
    <property type="entry name" value="Enolpyruvate transferase domain"/>
    <property type="match status" value="2"/>
</dbReference>
<dbReference type="HAMAP" id="MF_00111">
    <property type="entry name" value="MurA"/>
    <property type="match status" value="1"/>
</dbReference>
<dbReference type="InterPro" id="IPR001986">
    <property type="entry name" value="Enolpyruvate_Tfrase_dom"/>
</dbReference>
<dbReference type="InterPro" id="IPR036968">
    <property type="entry name" value="Enolpyruvate_Tfrase_sf"/>
</dbReference>
<dbReference type="InterPro" id="IPR050068">
    <property type="entry name" value="MurA_subfamily"/>
</dbReference>
<dbReference type="InterPro" id="IPR013792">
    <property type="entry name" value="RNA3'P_cycl/enolpyr_Trfase_a/b"/>
</dbReference>
<dbReference type="InterPro" id="IPR005750">
    <property type="entry name" value="UDP_GlcNAc_COvinyl_MurA"/>
</dbReference>
<dbReference type="NCBIfam" id="TIGR01072">
    <property type="entry name" value="murA"/>
    <property type="match status" value="1"/>
</dbReference>
<dbReference type="NCBIfam" id="NF006873">
    <property type="entry name" value="PRK09369.1"/>
    <property type="match status" value="1"/>
</dbReference>
<dbReference type="PANTHER" id="PTHR43783">
    <property type="entry name" value="UDP-N-ACETYLGLUCOSAMINE 1-CARBOXYVINYLTRANSFERASE"/>
    <property type="match status" value="1"/>
</dbReference>
<dbReference type="PANTHER" id="PTHR43783:SF1">
    <property type="entry name" value="UDP-N-ACETYLGLUCOSAMINE 1-CARBOXYVINYLTRANSFERASE"/>
    <property type="match status" value="1"/>
</dbReference>
<dbReference type="Pfam" id="PF00275">
    <property type="entry name" value="EPSP_synthase"/>
    <property type="match status" value="1"/>
</dbReference>
<dbReference type="SUPFAM" id="SSF55205">
    <property type="entry name" value="EPT/RTPC-like"/>
    <property type="match status" value="1"/>
</dbReference>
<protein>
    <recommendedName>
        <fullName evidence="1">UDP-N-acetylglucosamine 1-carboxyvinyltransferase</fullName>
        <ecNumber evidence="1">2.5.1.7</ecNumber>
    </recommendedName>
    <alternativeName>
        <fullName evidence="1">Enoylpyruvate transferase</fullName>
    </alternativeName>
    <alternativeName>
        <fullName evidence="1">UDP-N-acetylglucosamine enolpyruvyl transferase</fullName>
        <shortName evidence="1">EPT</shortName>
    </alternativeName>
</protein>
<organism>
    <name type="scientific">Rhizobium etli (strain CIAT 652)</name>
    <dbReference type="NCBI Taxonomy" id="491916"/>
    <lineage>
        <taxon>Bacteria</taxon>
        <taxon>Pseudomonadati</taxon>
        <taxon>Pseudomonadota</taxon>
        <taxon>Alphaproteobacteria</taxon>
        <taxon>Hyphomicrobiales</taxon>
        <taxon>Rhizobiaceae</taxon>
        <taxon>Rhizobium/Agrobacterium group</taxon>
        <taxon>Rhizobium</taxon>
    </lineage>
</organism>
<evidence type="ECO:0000255" key="1">
    <source>
        <dbReference type="HAMAP-Rule" id="MF_00111"/>
    </source>
</evidence>
<feature type="chain" id="PRO_1000094712" description="UDP-N-acetylglucosamine 1-carboxyvinyltransferase">
    <location>
        <begin position="1"/>
        <end position="430"/>
    </location>
</feature>
<feature type="active site" description="Proton donor" evidence="1">
    <location>
        <position position="126"/>
    </location>
</feature>
<feature type="binding site" evidence="1">
    <location>
        <begin position="22"/>
        <end position="23"/>
    </location>
    <ligand>
        <name>phosphoenolpyruvate</name>
        <dbReference type="ChEBI" id="CHEBI:58702"/>
    </ligand>
</feature>
<feature type="binding site" evidence="1">
    <location>
        <position position="102"/>
    </location>
    <ligand>
        <name>UDP-N-acetyl-alpha-D-glucosamine</name>
        <dbReference type="ChEBI" id="CHEBI:57705"/>
    </ligand>
</feature>
<feature type="binding site" evidence="1">
    <location>
        <begin position="131"/>
        <end position="135"/>
    </location>
    <ligand>
        <name>UDP-N-acetyl-alpha-D-glucosamine</name>
        <dbReference type="ChEBI" id="CHEBI:57705"/>
    </ligand>
</feature>
<feature type="binding site" evidence="1">
    <location>
        <begin position="172"/>
        <end position="175"/>
    </location>
    <ligand>
        <name>UDP-N-acetyl-alpha-D-glucosamine</name>
        <dbReference type="ChEBI" id="CHEBI:57705"/>
    </ligand>
</feature>
<feature type="binding site" evidence="1">
    <location>
        <position position="317"/>
    </location>
    <ligand>
        <name>UDP-N-acetyl-alpha-D-glucosamine</name>
        <dbReference type="ChEBI" id="CHEBI:57705"/>
    </ligand>
</feature>
<feature type="binding site" evidence="1">
    <location>
        <position position="339"/>
    </location>
    <ligand>
        <name>UDP-N-acetyl-alpha-D-glucosamine</name>
        <dbReference type="ChEBI" id="CHEBI:57705"/>
    </ligand>
</feature>
<feature type="modified residue" description="2-(S-cysteinyl)pyruvic acid O-phosphothioketal" evidence="1">
    <location>
        <position position="126"/>
    </location>
</feature>
<name>MURA_RHIE6</name>
<gene>
    <name evidence="1" type="primary">murA</name>
    <name type="ordered locus">RHECIAT_CH0000654</name>
</gene>
<proteinExistence type="inferred from homology"/>
<keyword id="KW-0131">Cell cycle</keyword>
<keyword id="KW-0132">Cell division</keyword>
<keyword id="KW-0133">Cell shape</keyword>
<keyword id="KW-0961">Cell wall biogenesis/degradation</keyword>
<keyword id="KW-0963">Cytoplasm</keyword>
<keyword id="KW-0573">Peptidoglycan synthesis</keyword>
<keyword id="KW-0670">Pyruvate</keyword>
<keyword id="KW-0808">Transferase</keyword>
<sequence>MDRIRIVGGNELNGIIPISGAKNAALPLMIASLLTSDTLTLENVPHLADVELLMRILGNHGVDVAVNGRRERQEDSYARTIHFTCRTIVDTTASYELVSKMRASFWVIGPLLAREGHCRVSLPGGCAIGTRPVDLFIEGLTALGATMEIDAGYINAKAPDGGLIGARYTFPKVSVGATHVMMMAATLARGTTVIGNAAREPEVVDLANCLNAMGAKISGAGTATITIEGVTSLSGARHRVLPDRIETGTYAMAVAMAGGDVVLENTDVALLETAVETLRRAGADISATNNGMRIKRNGAGIKPVDIVTDPFPGFPTDLQAQFMALMTRSSGISHVTETIFENRFMHVQELARLGARITLSGQTAKIEGVQRLRGAPVMATDLRASVSLVIAGLAAEGETTVSRVYHLDRGFERLEEKLTRCGAVVQRISE</sequence>